<dbReference type="EMBL" id="CP000036">
    <property type="protein sequence ID" value="ABB64875.1"/>
    <property type="molecule type" value="Genomic_DNA"/>
</dbReference>
<dbReference type="RefSeq" id="WP_001295564.1">
    <property type="nucleotide sequence ID" value="NC_007613.1"/>
</dbReference>
<dbReference type="SMR" id="Q325Y3"/>
<dbReference type="GeneID" id="93777270"/>
<dbReference type="KEGG" id="sbo:SBO_0145"/>
<dbReference type="HOGENOM" id="CLU_069054_5_3_6"/>
<dbReference type="Proteomes" id="UP000007067">
    <property type="component" value="Chromosome"/>
</dbReference>
<dbReference type="GO" id="GO:0005829">
    <property type="term" value="C:cytosol"/>
    <property type="evidence" value="ECO:0007669"/>
    <property type="project" value="TreeGrafter"/>
</dbReference>
<dbReference type="GO" id="GO:0051537">
    <property type="term" value="F:2 iron, 2 sulfur cluster binding"/>
    <property type="evidence" value="ECO:0007669"/>
    <property type="project" value="UniProtKB-ARBA"/>
</dbReference>
<dbReference type="GO" id="GO:0051539">
    <property type="term" value="F:4 iron, 4 sulfur cluster binding"/>
    <property type="evidence" value="ECO:0007669"/>
    <property type="project" value="TreeGrafter"/>
</dbReference>
<dbReference type="GO" id="GO:0005506">
    <property type="term" value="F:iron ion binding"/>
    <property type="evidence" value="ECO:0007669"/>
    <property type="project" value="UniProtKB-UniRule"/>
</dbReference>
<dbReference type="GO" id="GO:0016226">
    <property type="term" value="P:iron-sulfur cluster assembly"/>
    <property type="evidence" value="ECO:0007669"/>
    <property type="project" value="UniProtKB-UniRule"/>
</dbReference>
<dbReference type="FunFam" id="2.60.300.12:FF:000002">
    <property type="entry name" value="Iron-sulfur cluster insertion protein ErpA"/>
    <property type="match status" value="1"/>
</dbReference>
<dbReference type="Gene3D" id="2.60.300.12">
    <property type="entry name" value="HesB-like domain"/>
    <property type="match status" value="1"/>
</dbReference>
<dbReference type="HAMAP" id="MF_01380">
    <property type="entry name" value="Fe_S_insert_ErpA"/>
    <property type="match status" value="1"/>
</dbReference>
<dbReference type="InterPro" id="IPR000361">
    <property type="entry name" value="FeS_biogenesis"/>
</dbReference>
<dbReference type="InterPro" id="IPR016092">
    <property type="entry name" value="FeS_cluster_insertion"/>
</dbReference>
<dbReference type="InterPro" id="IPR017870">
    <property type="entry name" value="FeS_cluster_insertion_CS"/>
</dbReference>
<dbReference type="InterPro" id="IPR023063">
    <property type="entry name" value="FeS_cluster_insertion_RrpA"/>
</dbReference>
<dbReference type="InterPro" id="IPR035903">
    <property type="entry name" value="HesB-like_dom_sf"/>
</dbReference>
<dbReference type="NCBIfam" id="TIGR00049">
    <property type="entry name" value="iron-sulfur cluster assembly accessory protein"/>
    <property type="match status" value="1"/>
</dbReference>
<dbReference type="NCBIfam" id="NF010147">
    <property type="entry name" value="PRK13623.1"/>
    <property type="match status" value="1"/>
</dbReference>
<dbReference type="PANTHER" id="PTHR43011">
    <property type="entry name" value="IRON-SULFUR CLUSTER ASSEMBLY 2 HOMOLOG, MITOCHONDRIAL"/>
    <property type="match status" value="1"/>
</dbReference>
<dbReference type="PANTHER" id="PTHR43011:SF1">
    <property type="entry name" value="IRON-SULFUR CLUSTER ASSEMBLY 2 HOMOLOG, MITOCHONDRIAL"/>
    <property type="match status" value="1"/>
</dbReference>
<dbReference type="Pfam" id="PF01521">
    <property type="entry name" value="Fe-S_biosyn"/>
    <property type="match status" value="1"/>
</dbReference>
<dbReference type="SUPFAM" id="SSF89360">
    <property type="entry name" value="HesB-like domain"/>
    <property type="match status" value="1"/>
</dbReference>
<dbReference type="PROSITE" id="PS01152">
    <property type="entry name" value="HESB"/>
    <property type="match status" value="1"/>
</dbReference>
<keyword id="KW-0408">Iron</keyword>
<keyword id="KW-0411">Iron-sulfur</keyword>
<keyword id="KW-0479">Metal-binding</keyword>
<feature type="chain" id="PRO_0000311559" description="Iron-sulfur cluster insertion protein ErpA">
    <location>
        <begin position="1"/>
        <end position="114"/>
    </location>
</feature>
<feature type="binding site" evidence="1">
    <location>
        <position position="42"/>
    </location>
    <ligand>
        <name>iron-sulfur cluster</name>
        <dbReference type="ChEBI" id="CHEBI:30408"/>
    </ligand>
</feature>
<feature type="binding site" evidence="1">
    <location>
        <position position="106"/>
    </location>
    <ligand>
        <name>iron-sulfur cluster</name>
        <dbReference type="ChEBI" id="CHEBI:30408"/>
    </ligand>
</feature>
<feature type="binding site" evidence="1">
    <location>
        <position position="108"/>
    </location>
    <ligand>
        <name>iron-sulfur cluster</name>
        <dbReference type="ChEBI" id="CHEBI:30408"/>
    </ligand>
</feature>
<comment type="function">
    <text evidence="1">Required for insertion of 4Fe-4S clusters for at least IspG.</text>
</comment>
<comment type="cofactor">
    <cofactor evidence="1">
        <name>iron-sulfur cluster</name>
        <dbReference type="ChEBI" id="CHEBI:30408"/>
    </cofactor>
    <text evidence="1">Binds 1 iron-sulfur cluster per subunit.</text>
</comment>
<comment type="subunit">
    <text evidence="1">Homodimer.</text>
</comment>
<comment type="similarity">
    <text evidence="1">Belongs to the HesB/IscA family.</text>
</comment>
<protein>
    <recommendedName>
        <fullName evidence="1">Iron-sulfur cluster insertion protein ErpA</fullName>
    </recommendedName>
</protein>
<reference key="1">
    <citation type="journal article" date="2005" name="Nucleic Acids Res.">
        <title>Genome dynamics and diversity of Shigella species, the etiologic agents of bacillary dysentery.</title>
        <authorList>
            <person name="Yang F."/>
            <person name="Yang J."/>
            <person name="Zhang X."/>
            <person name="Chen L."/>
            <person name="Jiang Y."/>
            <person name="Yan Y."/>
            <person name="Tang X."/>
            <person name="Wang J."/>
            <person name="Xiong Z."/>
            <person name="Dong J."/>
            <person name="Xue Y."/>
            <person name="Zhu Y."/>
            <person name="Xu X."/>
            <person name="Sun L."/>
            <person name="Chen S."/>
            <person name="Nie H."/>
            <person name="Peng J."/>
            <person name="Xu J."/>
            <person name="Wang Y."/>
            <person name="Yuan Z."/>
            <person name="Wen Y."/>
            <person name="Yao Z."/>
            <person name="Shen Y."/>
            <person name="Qiang B."/>
            <person name="Hou Y."/>
            <person name="Yu J."/>
            <person name="Jin Q."/>
        </authorList>
    </citation>
    <scope>NUCLEOTIDE SEQUENCE [LARGE SCALE GENOMIC DNA]</scope>
    <source>
        <strain>Sb227</strain>
    </source>
</reference>
<gene>
    <name evidence="1" type="primary">erpA</name>
    <name type="ordered locus">SBO_0145</name>
</gene>
<name>ERPA_SHIBS</name>
<accession>Q325Y3</accession>
<proteinExistence type="inferred from homology"/>
<sequence length="114" mass="12100">MSDDVALPLEFTDAAANKVKSLIADEDNPNLKLRVYITGGGCSGFQYGFTFDDQVNEGDMTIEKQGVGLVVDPMSLQYLVGGSVDYTEGLEGSRFIVTNPNAKSTCGCGSSFSI</sequence>
<organism>
    <name type="scientific">Shigella boydii serotype 4 (strain Sb227)</name>
    <dbReference type="NCBI Taxonomy" id="300268"/>
    <lineage>
        <taxon>Bacteria</taxon>
        <taxon>Pseudomonadati</taxon>
        <taxon>Pseudomonadota</taxon>
        <taxon>Gammaproteobacteria</taxon>
        <taxon>Enterobacterales</taxon>
        <taxon>Enterobacteriaceae</taxon>
        <taxon>Shigella</taxon>
    </lineage>
</organism>
<evidence type="ECO:0000255" key="1">
    <source>
        <dbReference type="HAMAP-Rule" id="MF_01380"/>
    </source>
</evidence>